<reference key="1">
    <citation type="journal article" date="2001" name="Nature">
        <title>Complete genome sequence of Salmonella enterica serovar Typhimurium LT2.</title>
        <authorList>
            <person name="McClelland M."/>
            <person name="Sanderson K.E."/>
            <person name="Spieth J."/>
            <person name="Clifton S.W."/>
            <person name="Latreille P."/>
            <person name="Courtney L."/>
            <person name="Porwollik S."/>
            <person name="Ali J."/>
            <person name="Dante M."/>
            <person name="Du F."/>
            <person name="Hou S."/>
            <person name="Layman D."/>
            <person name="Leonard S."/>
            <person name="Nguyen C."/>
            <person name="Scott K."/>
            <person name="Holmes A."/>
            <person name="Grewal N."/>
            <person name="Mulvaney E."/>
            <person name="Ryan E."/>
            <person name="Sun H."/>
            <person name="Florea L."/>
            <person name="Miller W."/>
            <person name="Stoneking T."/>
            <person name="Nhan M."/>
            <person name="Waterston R."/>
            <person name="Wilson R.K."/>
        </authorList>
    </citation>
    <scope>NUCLEOTIDE SEQUENCE [LARGE SCALE GENOMIC DNA]</scope>
    <source>
        <strain>LT2 / SGSC1412 / ATCC 700720</strain>
    </source>
</reference>
<comment type="function">
    <text evidence="1">Catalyzes the formation of 5-methyl-uridine at position 747 (m5U747) in 23S rRNA.</text>
</comment>
<comment type="catalytic activity">
    <reaction evidence="1">
        <text>uridine(747) in 23S rRNA + S-adenosyl-L-methionine = 5-methyluridine(747) in 23S rRNA + S-adenosyl-L-homocysteine + H(+)</text>
        <dbReference type="Rhea" id="RHEA:42628"/>
        <dbReference type="Rhea" id="RHEA-COMP:10154"/>
        <dbReference type="Rhea" id="RHEA-COMP:10155"/>
        <dbReference type="ChEBI" id="CHEBI:15378"/>
        <dbReference type="ChEBI" id="CHEBI:57856"/>
        <dbReference type="ChEBI" id="CHEBI:59789"/>
        <dbReference type="ChEBI" id="CHEBI:65315"/>
        <dbReference type="ChEBI" id="CHEBI:74447"/>
        <dbReference type="EC" id="2.1.1.189"/>
    </reaction>
</comment>
<comment type="similarity">
    <text evidence="1">Belongs to the class I-like SAM-binding methyltransferase superfamily. RNA M5U methyltransferase family. RlmC subfamily.</text>
</comment>
<name>RLMC_SALTY</name>
<feature type="chain" id="PRO_0000161935" description="23S rRNA (uracil(747)-C(5))-methyltransferase RlmC">
    <location>
        <begin position="1"/>
        <end position="376"/>
    </location>
</feature>
<feature type="active site" description="Nucleophile" evidence="1">
    <location>
        <position position="334"/>
    </location>
</feature>
<feature type="binding site" evidence="1">
    <location>
        <position position="3"/>
    </location>
    <ligand>
        <name>[4Fe-4S] cluster</name>
        <dbReference type="ChEBI" id="CHEBI:49883"/>
    </ligand>
</feature>
<feature type="binding site" evidence="1">
    <location>
        <position position="11"/>
    </location>
    <ligand>
        <name>[4Fe-4S] cluster</name>
        <dbReference type="ChEBI" id="CHEBI:49883"/>
    </ligand>
</feature>
<feature type="binding site" evidence="1">
    <location>
        <position position="14"/>
    </location>
    <ligand>
        <name>[4Fe-4S] cluster</name>
        <dbReference type="ChEBI" id="CHEBI:49883"/>
    </ligand>
</feature>
<feature type="binding site" evidence="1">
    <location>
        <position position="87"/>
    </location>
    <ligand>
        <name>[4Fe-4S] cluster</name>
        <dbReference type="ChEBI" id="CHEBI:49883"/>
    </ligand>
</feature>
<feature type="binding site" evidence="1">
    <location>
        <position position="212"/>
    </location>
    <ligand>
        <name>S-adenosyl-L-methionine</name>
        <dbReference type="ChEBI" id="CHEBI:59789"/>
    </ligand>
</feature>
<feature type="binding site" evidence="1">
    <location>
        <position position="241"/>
    </location>
    <ligand>
        <name>S-adenosyl-L-methionine</name>
        <dbReference type="ChEBI" id="CHEBI:59789"/>
    </ligand>
</feature>
<feature type="binding site" evidence="1">
    <location>
        <position position="262"/>
    </location>
    <ligand>
        <name>S-adenosyl-L-methionine</name>
        <dbReference type="ChEBI" id="CHEBI:59789"/>
    </ligand>
</feature>
<feature type="binding site" evidence="1">
    <location>
        <position position="307"/>
    </location>
    <ligand>
        <name>S-adenosyl-L-methionine</name>
        <dbReference type="ChEBI" id="CHEBI:59789"/>
    </ligand>
</feature>
<keyword id="KW-0004">4Fe-4S</keyword>
<keyword id="KW-0408">Iron</keyword>
<keyword id="KW-0411">Iron-sulfur</keyword>
<keyword id="KW-0479">Metal-binding</keyword>
<keyword id="KW-0489">Methyltransferase</keyword>
<keyword id="KW-1185">Reference proteome</keyword>
<keyword id="KW-0698">rRNA processing</keyword>
<keyword id="KW-0949">S-adenosyl-L-methionine</keyword>
<keyword id="KW-0808">Transferase</keyword>
<sequence length="376" mass="42180">MQCALYDAGRCRSCQWITQSVNEQLSAKTADLHRLLAGLPVEQWCAPIGGPEQHFRNKAKMVVSGSVEKPLFGMLHRDGTPVDLCGCPLYPASFDPVFSALKPFIARAGLTPYNVARKRGELKYLLLTESQFDGGMMLRFVLRSETKLTQLRAALPWLRAQLPQLRVITANIQPVHMAIMEGETEIYLTDQQALAERFNDVPLWIRPQSFFQTNPTVASRLYATARDWVGQLPVRHMWDLFCGVGGFGLHCATPQMQLTGIEIAPEAIACAKQSAAELGLTRLHFQALDSTQFATAQGETPDLVLVNPPRRGIGKPLCDYLAQMAPRFIIYSSCNAQTMAQDIRHLPNYRIQRVQLFDMFPHTAHYEVLALLRRSI</sequence>
<accession>Q8ZQJ5</accession>
<gene>
    <name evidence="1" type="primary">rlmC</name>
    <name type="synonym">rumB</name>
    <name type="ordered locus">STM0882</name>
</gene>
<organism>
    <name type="scientific">Salmonella typhimurium (strain LT2 / SGSC1412 / ATCC 700720)</name>
    <dbReference type="NCBI Taxonomy" id="99287"/>
    <lineage>
        <taxon>Bacteria</taxon>
        <taxon>Pseudomonadati</taxon>
        <taxon>Pseudomonadota</taxon>
        <taxon>Gammaproteobacteria</taxon>
        <taxon>Enterobacterales</taxon>
        <taxon>Enterobacteriaceae</taxon>
        <taxon>Salmonella</taxon>
    </lineage>
</organism>
<evidence type="ECO:0000255" key="1">
    <source>
        <dbReference type="HAMAP-Rule" id="MF_01012"/>
    </source>
</evidence>
<proteinExistence type="inferred from homology"/>
<dbReference type="EC" id="2.1.1.189" evidence="1"/>
<dbReference type="EMBL" id="AE006468">
    <property type="protein sequence ID" value="AAL19818.1"/>
    <property type="molecule type" value="Genomic_DNA"/>
</dbReference>
<dbReference type="RefSeq" id="WP_001149781.1">
    <property type="nucleotide sequence ID" value="NC_003197.2"/>
</dbReference>
<dbReference type="SMR" id="Q8ZQJ5"/>
<dbReference type="STRING" id="99287.STM0882"/>
<dbReference type="PaxDb" id="99287-STM0882"/>
<dbReference type="DNASU" id="1252401"/>
<dbReference type="KEGG" id="stm:STM0882"/>
<dbReference type="PATRIC" id="fig|99287.12.peg.921"/>
<dbReference type="HOGENOM" id="CLU_014689_0_0_6"/>
<dbReference type="PhylomeDB" id="Q8ZQJ5"/>
<dbReference type="BioCyc" id="SENT99287:STM0882-MONOMER"/>
<dbReference type="Proteomes" id="UP000001014">
    <property type="component" value="Chromosome"/>
</dbReference>
<dbReference type="GO" id="GO:0051539">
    <property type="term" value="F:4 iron, 4 sulfur cluster binding"/>
    <property type="evidence" value="ECO:0007669"/>
    <property type="project" value="UniProtKB-KW"/>
</dbReference>
<dbReference type="GO" id="GO:0005506">
    <property type="term" value="F:iron ion binding"/>
    <property type="evidence" value="ECO:0007669"/>
    <property type="project" value="UniProtKB-UniRule"/>
</dbReference>
<dbReference type="GO" id="GO:0070041">
    <property type="term" value="F:rRNA (uridine-C5-)-methyltransferase activity"/>
    <property type="evidence" value="ECO:0000318"/>
    <property type="project" value="GO_Central"/>
</dbReference>
<dbReference type="GO" id="GO:0070475">
    <property type="term" value="P:rRNA base methylation"/>
    <property type="evidence" value="ECO:0000318"/>
    <property type="project" value="GO_Central"/>
</dbReference>
<dbReference type="CDD" id="cd02440">
    <property type="entry name" value="AdoMet_MTases"/>
    <property type="match status" value="1"/>
</dbReference>
<dbReference type="FunFam" id="2.40.50.1070:FF:000002">
    <property type="entry name" value="23S rRNA (uracil(747)-C(5))-methyltransferase RlmC"/>
    <property type="match status" value="1"/>
</dbReference>
<dbReference type="FunFam" id="3.40.50.150:FF:000049">
    <property type="entry name" value="23S rRNA (uracil(747)-C(5))-methyltransferase RlmC"/>
    <property type="match status" value="1"/>
</dbReference>
<dbReference type="Gene3D" id="2.40.50.1070">
    <property type="match status" value="1"/>
</dbReference>
<dbReference type="Gene3D" id="3.40.50.150">
    <property type="entry name" value="Vaccinia Virus protein VP39"/>
    <property type="match status" value="1"/>
</dbReference>
<dbReference type="HAMAP" id="MF_01012">
    <property type="entry name" value="23SrRNA_methyltr_RlmC"/>
    <property type="match status" value="1"/>
</dbReference>
<dbReference type="InterPro" id="IPR011825">
    <property type="entry name" value="23SrRNA_MeTrfase_RlmC"/>
</dbReference>
<dbReference type="InterPro" id="IPR030390">
    <property type="entry name" value="MeTrfase_TrmA_AS"/>
</dbReference>
<dbReference type="InterPro" id="IPR030391">
    <property type="entry name" value="MeTrfase_TrmA_CS"/>
</dbReference>
<dbReference type="InterPro" id="IPR029063">
    <property type="entry name" value="SAM-dependent_MTases_sf"/>
</dbReference>
<dbReference type="InterPro" id="IPR010280">
    <property type="entry name" value="U5_MeTrfase_fam"/>
</dbReference>
<dbReference type="NCBIfam" id="TIGR02085">
    <property type="entry name" value="meth_trns_rumB"/>
    <property type="match status" value="1"/>
</dbReference>
<dbReference type="PANTHER" id="PTHR11061">
    <property type="entry name" value="RNA M5U METHYLTRANSFERASE"/>
    <property type="match status" value="1"/>
</dbReference>
<dbReference type="PANTHER" id="PTHR11061:SF30">
    <property type="entry name" value="TRNA (URACIL(54)-C(5))-METHYLTRANSFERASE"/>
    <property type="match status" value="1"/>
</dbReference>
<dbReference type="Pfam" id="PF05958">
    <property type="entry name" value="tRNA_U5-meth_tr"/>
    <property type="match status" value="1"/>
</dbReference>
<dbReference type="SUPFAM" id="SSF53335">
    <property type="entry name" value="S-adenosyl-L-methionine-dependent methyltransferases"/>
    <property type="match status" value="1"/>
</dbReference>
<dbReference type="PROSITE" id="PS51687">
    <property type="entry name" value="SAM_MT_RNA_M5U"/>
    <property type="match status" value="1"/>
</dbReference>
<dbReference type="PROSITE" id="PS01230">
    <property type="entry name" value="TRMA_1"/>
    <property type="match status" value="1"/>
</dbReference>
<dbReference type="PROSITE" id="PS01231">
    <property type="entry name" value="TRMA_2"/>
    <property type="match status" value="1"/>
</dbReference>
<protein>
    <recommendedName>
        <fullName evidence="1">23S rRNA (uracil(747)-C(5))-methyltransferase RlmC</fullName>
        <ecNumber evidence="1">2.1.1.189</ecNumber>
    </recommendedName>
    <alternativeName>
        <fullName evidence="1">23S rRNA(m5U747)-methyltransferase</fullName>
    </alternativeName>
</protein>